<organism>
    <name type="scientific">Papio hamadryas</name>
    <name type="common">Hamadryas baboon</name>
    <dbReference type="NCBI Taxonomy" id="9557"/>
    <lineage>
        <taxon>Eukaryota</taxon>
        <taxon>Metazoa</taxon>
        <taxon>Chordata</taxon>
        <taxon>Craniata</taxon>
        <taxon>Vertebrata</taxon>
        <taxon>Euteleostomi</taxon>
        <taxon>Mammalia</taxon>
        <taxon>Eutheria</taxon>
        <taxon>Euarchontoglires</taxon>
        <taxon>Primates</taxon>
        <taxon>Haplorrhini</taxon>
        <taxon>Catarrhini</taxon>
        <taxon>Cercopithecidae</taxon>
        <taxon>Cercopithecinae</taxon>
        <taxon>Papio</taxon>
    </lineage>
</organism>
<sequence>MLTLTHICTVSYEVRSTFLFISVLEFAVGFLTNAFISLVNFWDVVKRQPLSNSDCVLLCLSISRLFLHGLLFLSAIQLTHFQKLSEPLNHSYQVILMLWMIANQANLWLAACLSLLYCSKLIRFSHTFLICLASWVSRKISQMLLGIILCSCICTVLCVWCFFGRLHFTVTTVLFMNNNTRLNWQIKDLNLFYSFLFCYLWSVPPFLLFLVSSGMLTVSLGRHMRTMKVYTRDSRDPSLEAHIKALKSLVSFFCFFVISSCAAFISVPLLILWHDKIGVMVCVGIMAACPSGHAAVLISGNAKLRRAVTTILLWAQSSLKVRADHMADSRTLC</sequence>
<keyword id="KW-0297">G-protein coupled receptor</keyword>
<keyword id="KW-0325">Glycoprotein</keyword>
<keyword id="KW-0472">Membrane</keyword>
<keyword id="KW-0675">Receptor</keyword>
<keyword id="KW-0716">Sensory transduction</keyword>
<keyword id="KW-0919">Taste</keyword>
<keyword id="KW-0807">Transducer</keyword>
<keyword id="KW-0812">Transmembrane</keyword>
<keyword id="KW-1133">Transmembrane helix</keyword>
<evidence type="ECO:0000250" key="1"/>
<evidence type="ECO:0000255" key="2"/>
<evidence type="ECO:0000305" key="3"/>
<gene>
    <name type="primary">TAS2R38</name>
</gene>
<reference key="1">
    <citation type="journal article" date="2005" name="Mol. Biol. Evol.">
        <title>Evolution of bitter taste receptors in humans and apes.</title>
        <authorList>
            <person name="Fischer A."/>
            <person name="Gilad Y."/>
            <person name="Man O."/>
            <person name="Paeaebo S."/>
        </authorList>
    </citation>
    <scope>NUCLEOTIDE SEQUENCE [GENOMIC DNA]</scope>
</reference>
<name>T2R38_PAPHA</name>
<protein>
    <recommendedName>
        <fullName>Taste receptor type 2 member 38</fullName>
        <shortName>T2R38</shortName>
    </recommendedName>
</protein>
<dbReference type="EMBL" id="AY724835">
    <property type="protein sequence ID" value="AAU21070.1"/>
    <property type="molecule type" value="Genomic_DNA"/>
</dbReference>
<dbReference type="SMR" id="Q646E9"/>
<dbReference type="GlyCosmos" id="Q646E9">
    <property type="glycosylation" value="1 site, No reported glycans"/>
</dbReference>
<dbReference type="GO" id="GO:0005886">
    <property type="term" value="C:plasma membrane"/>
    <property type="evidence" value="ECO:0007669"/>
    <property type="project" value="UniProtKB-ARBA"/>
</dbReference>
<dbReference type="GO" id="GO:0033038">
    <property type="term" value="F:bitter taste receptor activity"/>
    <property type="evidence" value="ECO:0007669"/>
    <property type="project" value="InterPro"/>
</dbReference>
<dbReference type="GO" id="GO:0004930">
    <property type="term" value="F:G protein-coupled receptor activity"/>
    <property type="evidence" value="ECO:0007669"/>
    <property type="project" value="UniProtKB-KW"/>
</dbReference>
<dbReference type="CDD" id="cd15025">
    <property type="entry name" value="7tm_TAS2R38"/>
    <property type="match status" value="1"/>
</dbReference>
<dbReference type="FunFam" id="1.20.1070.10:FF:000055">
    <property type="entry name" value="Taste receptor type 2"/>
    <property type="match status" value="1"/>
</dbReference>
<dbReference type="InterPro" id="IPR007960">
    <property type="entry name" value="TAS2R"/>
</dbReference>
<dbReference type="InterPro" id="IPR030050">
    <property type="entry name" value="TAS2R38"/>
</dbReference>
<dbReference type="PANTHER" id="PTHR11394">
    <property type="entry name" value="TASTE RECEPTOR TYPE 2"/>
    <property type="match status" value="1"/>
</dbReference>
<dbReference type="PANTHER" id="PTHR11394:SF52">
    <property type="entry name" value="TASTE RECEPTOR TYPE 2 MEMBER 38"/>
    <property type="match status" value="1"/>
</dbReference>
<dbReference type="Pfam" id="PF05296">
    <property type="entry name" value="TAS2R"/>
    <property type="match status" value="1"/>
</dbReference>
<dbReference type="SUPFAM" id="SSF81321">
    <property type="entry name" value="Family A G protein-coupled receptor-like"/>
    <property type="match status" value="1"/>
</dbReference>
<proteinExistence type="inferred from homology"/>
<accession>Q646E9</accession>
<feature type="chain" id="PRO_0000082277" description="Taste receptor type 2 member 38">
    <location>
        <begin position="1"/>
        <end position="333"/>
    </location>
</feature>
<feature type="topological domain" description="Extracellular" evidence="2">
    <location>
        <begin position="1"/>
        <end position="17"/>
    </location>
</feature>
<feature type="transmembrane region" description="Helical; Name=1" evidence="2">
    <location>
        <begin position="18"/>
        <end position="38"/>
    </location>
</feature>
<feature type="topological domain" description="Cytoplasmic" evidence="2">
    <location>
        <begin position="39"/>
        <end position="55"/>
    </location>
</feature>
<feature type="transmembrane region" description="Helical; Name=2" evidence="2">
    <location>
        <begin position="56"/>
        <end position="76"/>
    </location>
</feature>
<feature type="topological domain" description="Extracellular" evidence="2">
    <location>
        <begin position="77"/>
        <end position="94"/>
    </location>
</feature>
<feature type="transmembrane region" description="Helical; Name=3" evidence="2">
    <location>
        <begin position="95"/>
        <end position="115"/>
    </location>
</feature>
<feature type="topological domain" description="Cytoplasmic" evidence="2">
    <location>
        <begin position="116"/>
        <end position="142"/>
    </location>
</feature>
<feature type="transmembrane region" description="Helical; Name=4" evidence="2">
    <location>
        <begin position="143"/>
        <end position="163"/>
    </location>
</feature>
<feature type="topological domain" description="Extracellular" evidence="2">
    <location>
        <begin position="164"/>
        <end position="190"/>
    </location>
</feature>
<feature type="transmembrane region" description="Helical; Name=5" evidence="2">
    <location>
        <begin position="191"/>
        <end position="211"/>
    </location>
</feature>
<feature type="topological domain" description="Cytoplasmic" evidence="2">
    <location>
        <begin position="212"/>
        <end position="251"/>
    </location>
</feature>
<feature type="transmembrane region" description="Helical; Name=6" evidence="2">
    <location>
        <begin position="252"/>
        <end position="272"/>
    </location>
</feature>
<feature type="topological domain" description="Extracellular" evidence="2">
    <location>
        <begin position="273"/>
        <end position="276"/>
    </location>
</feature>
<feature type="transmembrane region" description="Helical; Name=7" evidence="2">
    <location>
        <begin position="277"/>
        <end position="297"/>
    </location>
</feature>
<feature type="topological domain" description="Cytoplasmic" evidence="2">
    <location>
        <begin position="298"/>
        <end position="333"/>
    </location>
</feature>
<feature type="glycosylation site" description="N-linked (GlcNAc...) asparagine" evidence="2">
    <location>
        <position position="178"/>
    </location>
</feature>
<comment type="function">
    <text evidence="1">Receptor that may play a role in the perception of bitterness and is gustducin-linked. May play a role in sensing the chemical composition of the gastrointestinal content. The activity of this receptor may stimulate alpha gustducin, mediate PLC-beta-2 activation and lead to the gating of TRPM5 (By similarity).</text>
</comment>
<comment type="subcellular location">
    <subcellularLocation>
        <location>Membrane</location>
        <topology>Multi-pass membrane protein</topology>
    </subcellularLocation>
</comment>
<comment type="miscellaneous">
    <text>Most taste cells may be activated by a limited number of bitter compounds; individual taste cells can discriminate among bitter stimuli.</text>
</comment>
<comment type="similarity">
    <text evidence="3">Belongs to the G-protein coupled receptor T2R family.</text>
</comment>